<organism>
    <name type="scientific">Thermosipho melanesiensis (strain DSM 12029 / CIP 104789 / BI429)</name>
    <dbReference type="NCBI Taxonomy" id="391009"/>
    <lineage>
        <taxon>Bacteria</taxon>
        <taxon>Thermotogati</taxon>
        <taxon>Thermotogota</taxon>
        <taxon>Thermotogae</taxon>
        <taxon>Thermotogales</taxon>
        <taxon>Fervidobacteriaceae</taxon>
        <taxon>Thermosipho</taxon>
    </lineage>
</organism>
<feature type="chain" id="PRO_1000212761" description="Ribosomal protein L11 methyltransferase">
    <location>
        <begin position="1"/>
        <end position="258"/>
    </location>
</feature>
<feature type="binding site" evidence="1">
    <location>
        <position position="117"/>
    </location>
    <ligand>
        <name>S-adenosyl-L-methionine</name>
        <dbReference type="ChEBI" id="CHEBI:59789"/>
    </ligand>
</feature>
<feature type="binding site" evidence="1">
    <location>
        <position position="138"/>
    </location>
    <ligand>
        <name>S-adenosyl-L-methionine</name>
        <dbReference type="ChEBI" id="CHEBI:59789"/>
    </ligand>
</feature>
<feature type="binding site" evidence="1">
    <location>
        <position position="160"/>
    </location>
    <ligand>
        <name>S-adenosyl-L-methionine</name>
        <dbReference type="ChEBI" id="CHEBI:59789"/>
    </ligand>
</feature>
<feature type="binding site" evidence="1">
    <location>
        <position position="201"/>
    </location>
    <ligand>
        <name>S-adenosyl-L-methionine</name>
        <dbReference type="ChEBI" id="CHEBI:59789"/>
    </ligand>
</feature>
<gene>
    <name evidence="1" type="primary">prmA</name>
    <name type="ordered locus">Tmel_0187</name>
</gene>
<protein>
    <recommendedName>
        <fullName evidence="1">Ribosomal protein L11 methyltransferase</fullName>
        <shortName evidence="1">L11 Mtase</shortName>
        <ecNumber evidence="1">2.1.1.-</ecNumber>
    </recommendedName>
</protein>
<sequence>MKKKFFERVYSISKEDVEKVEEYFFDKGISNYYFYETKEGVFLVLVSEKKNFEENFSYKLVEERETSSDEWIKNLISKPFEFIDGVYIDPDYHEINDKLVIRITPGLAFGTGLHTTTKLAATLLKKYLRQGMDVLDLGCGSGILSILAKKLGASGVLAVDNDKMAVESAIENVEKNNVEVEIRVSDLLKNVDGKYDLIVSNIIADVLVKALEDMPKFLKKNGIVILSGIIDSKLYLFEHLNIVEHRRKDEWNALVIKF</sequence>
<proteinExistence type="inferred from homology"/>
<reference key="1">
    <citation type="submission" date="2007-05" db="EMBL/GenBank/DDBJ databases">
        <title>Complete sequence of Thermosipho melanesiensis BI429.</title>
        <authorList>
            <consortium name="US DOE Joint Genome Institute"/>
            <person name="Copeland A."/>
            <person name="Lucas S."/>
            <person name="Lapidus A."/>
            <person name="Barry K."/>
            <person name="Glavina del Rio T."/>
            <person name="Dalin E."/>
            <person name="Tice H."/>
            <person name="Pitluck S."/>
            <person name="Chertkov O."/>
            <person name="Brettin T."/>
            <person name="Bruce D."/>
            <person name="Detter J.C."/>
            <person name="Han C."/>
            <person name="Schmutz J."/>
            <person name="Larimer F."/>
            <person name="Land M."/>
            <person name="Hauser L."/>
            <person name="Kyrpides N."/>
            <person name="Mikhailova N."/>
            <person name="Nelson K."/>
            <person name="Gogarten J.P."/>
            <person name="Noll K."/>
            <person name="Richardson P."/>
        </authorList>
    </citation>
    <scope>NUCLEOTIDE SEQUENCE [LARGE SCALE GENOMIC DNA]</scope>
    <source>
        <strain>DSM 12029 / CIP 104789 / BI429</strain>
    </source>
</reference>
<name>PRMA_THEM4</name>
<keyword id="KW-0963">Cytoplasm</keyword>
<keyword id="KW-0489">Methyltransferase</keyword>
<keyword id="KW-0949">S-adenosyl-L-methionine</keyword>
<keyword id="KW-0808">Transferase</keyword>
<dbReference type="EC" id="2.1.1.-" evidence="1"/>
<dbReference type="EMBL" id="CP000716">
    <property type="protein sequence ID" value="ABR30064.1"/>
    <property type="molecule type" value="Genomic_DNA"/>
</dbReference>
<dbReference type="RefSeq" id="WP_012056425.1">
    <property type="nucleotide sequence ID" value="NC_009616.1"/>
</dbReference>
<dbReference type="SMR" id="A6LJG3"/>
<dbReference type="STRING" id="391009.Tmel_0187"/>
<dbReference type="KEGG" id="tme:Tmel_0187"/>
<dbReference type="eggNOG" id="COG2264">
    <property type="taxonomic scope" value="Bacteria"/>
</dbReference>
<dbReference type="HOGENOM" id="CLU_049382_0_2_0"/>
<dbReference type="OrthoDB" id="9785995at2"/>
<dbReference type="Proteomes" id="UP000001110">
    <property type="component" value="Chromosome"/>
</dbReference>
<dbReference type="GO" id="GO:0005737">
    <property type="term" value="C:cytoplasm"/>
    <property type="evidence" value="ECO:0007669"/>
    <property type="project" value="UniProtKB-SubCell"/>
</dbReference>
<dbReference type="GO" id="GO:0016279">
    <property type="term" value="F:protein-lysine N-methyltransferase activity"/>
    <property type="evidence" value="ECO:0007669"/>
    <property type="project" value="RHEA"/>
</dbReference>
<dbReference type="GO" id="GO:0032259">
    <property type="term" value="P:methylation"/>
    <property type="evidence" value="ECO:0007669"/>
    <property type="project" value="UniProtKB-KW"/>
</dbReference>
<dbReference type="CDD" id="cd02440">
    <property type="entry name" value="AdoMet_MTases"/>
    <property type="match status" value="1"/>
</dbReference>
<dbReference type="Gene3D" id="3.40.50.150">
    <property type="entry name" value="Vaccinia Virus protein VP39"/>
    <property type="match status" value="1"/>
</dbReference>
<dbReference type="HAMAP" id="MF_00735">
    <property type="entry name" value="Methyltr_PrmA"/>
    <property type="match status" value="1"/>
</dbReference>
<dbReference type="InterPro" id="IPR050078">
    <property type="entry name" value="Ribosomal_L11_MeTrfase_PrmA"/>
</dbReference>
<dbReference type="InterPro" id="IPR004498">
    <property type="entry name" value="Ribosomal_PrmA_MeTrfase"/>
</dbReference>
<dbReference type="InterPro" id="IPR029063">
    <property type="entry name" value="SAM-dependent_MTases_sf"/>
</dbReference>
<dbReference type="PANTHER" id="PTHR43648">
    <property type="entry name" value="ELECTRON TRANSFER FLAVOPROTEIN BETA SUBUNIT LYSINE METHYLTRANSFERASE"/>
    <property type="match status" value="1"/>
</dbReference>
<dbReference type="PANTHER" id="PTHR43648:SF1">
    <property type="entry name" value="ELECTRON TRANSFER FLAVOPROTEIN BETA SUBUNIT LYSINE METHYLTRANSFERASE"/>
    <property type="match status" value="1"/>
</dbReference>
<dbReference type="Pfam" id="PF06325">
    <property type="entry name" value="PrmA"/>
    <property type="match status" value="1"/>
</dbReference>
<dbReference type="PIRSF" id="PIRSF000401">
    <property type="entry name" value="RPL11_MTase"/>
    <property type="match status" value="1"/>
</dbReference>
<dbReference type="SUPFAM" id="SSF53335">
    <property type="entry name" value="S-adenosyl-L-methionine-dependent methyltransferases"/>
    <property type="match status" value="1"/>
</dbReference>
<comment type="function">
    <text evidence="1">Methylates ribosomal protein L11.</text>
</comment>
<comment type="catalytic activity">
    <reaction evidence="1">
        <text>L-lysyl-[protein] + 3 S-adenosyl-L-methionine = N(6),N(6),N(6)-trimethyl-L-lysyl-[protein] + 3 S-adenosyl-L-homocysteine + 3 H(+)</text>
        <dbReference type="Rhea" id="RHEA:54192"/>
        <dbReference type="Rhea" id="RHEA-COMP:9752"/>
        <dbReference type="Rhea" id="RHEA-COMP:13826"/>
        <dbReference type="ChEBI" id="CHEBI:15378"/>
        <dbReference type="ChEBI" id="CHEBI:29969"/>
        <dbReference type="ChEBI" id="CHEBI:57856"/>
        <dbReference type="ChEBI" id="CHEBI:59789"/>
        <dbReference type="ChEBI" id="CHEBI:61961"/>
    </reaction>
</comment>
<comment type="subcellular location">
    <subcellularLocation>
        <location evidence="1">Cytoplasm</location>
    </subcellularLocation>
</comment>
<comment type="similarity">
    <text evidence="1">Belongs to the methyltransferase superfamily. PrmA family.</text>
</comment>
<accession>A6LJG3</accession>
<evidence type="ECO:0000255" key="1">
    <source>
        <dbReference type="HAMAP-Rule" id="MF_00735"/>
    </source>
</evidence>